<sequence>MGSTLKHLLLLLLVLIRHVDSAAIVKSLPGLEGRLPFELETGYIGIGEEEDIQLFYYFIKSENNPKEDPLLLWLDGGPGCSSLGGLLFENGPVALKSAVYNGSNPSLFSTTYSWTKMANIIYLDQPVGSGFSYSRTPIGKSSDTSEVKRIHEFLQKWLSKHPQFFSNPFYVTGDSYSGMIVPALVQEISKGNYICCKHLINLQGYVLGNPITYAEHEKNYRIPFSHGMSLISDELYESLKRNCKGNYENVDPRNTKCVRLVEEYHKCTDKINTQHILIPDCDKKGHGITSPDCYYYLYFLIECWANNERVREALHVTKGTKGQWQRCNWTIPYDNNIISSVPYHMDNSINGYRSLIYSGDHDITMPFQATQAWIKSLNYSIVDDWRPWMINDQIAGYTRTYSNKMTFATVKGGGHTAEYLPNESSIMFQRWISGQPL</sequence>
<gene>
    <name type="primary">SCPL10</name>
    <name type="synonym">SAT</name>
    <name type="ordered locus">At2g23000</name>
    <name type="ORF">F21P24.6</name>
</gene>
<evidence type="ECO:0000250" key="1"/>
<evidence type="ECO:0000255" key="2"/>
<evidence type="ECO:0000269" key="3">
    <source>
    </source>
</evidence>
<evidence type="ECO:0000269" key="4">
    <source>
    </source>
</evidence>
<evidence type="ECO:0000269" key="5">
    <source>
    </source>
</evidence>
<evidence type="ECO:0000305" key="6"/>
<evidence type="ECO:0000305" key="7">
    <source>
    </source>
</evidence>
<evidence type="ECO:0000305" key="8">
    <source>
    </source>
</evidence>
<evidence type="ECO:0000305" key="9">
    <source>
    </source>
</evidence>
<proteinExistence type="evidence at transcript level"/>
<feature type="signal peptide" evidence="2">
    <location>
        <begin position="1"/>
        <end position="21"/>
    </location>
</feature>
<feature type="chain" id="PRO_0000274624" description="Serine carboxypeptidase-like 10">
    <location>
        <begin position="22"/>
        <end position="437"/>
    </location>
</feature>
<feature type="active site" evidence="1">
    <location>
        <position position="175"/>
    </location>
</feature>
<feature type="active site" evidence="1">
    <location>
        <position position="362"/>
    </location>
</feature>
<feature type="active site" evidence="1">
    <location>
        <position position="415"/>
    </location>
</feature>
<feature type="glycosylation site" description="N-linked (GlcNAc...) asparagine" evidence="2">
    <location>
        <position position="101"/>
    </location>
</feature>
<feature type="glycosylation site" description="N-linked (GlcNAc...) asparagine" evidence="2">
    <location>
        <position position="328"/>
    </location>
</feature>
<feature type="glycosylation site" description="N-linked (GlcNAc...) asparagine" evidence="2">
    <location>
        <position position="378"/>
    </location>
</feature>
<feature type="glycosylation site" description="N-linked (GlcNAc...) asparagine" evidence="2">
    <location>
        <position position="422"/>
    </location>
</feature>
<feature type="disulfide bond" evidence="1">
    <location>
        <begin position="80"/>
        <end position="327"/>
    </location>
</feature>
<feature type="disulfide bond" evidence="1">
    <location>
        <begin position="243"/>
        <end position="257"/>
    </location>
</feature>
<feature type="disulfide bond" evidence="1">
    <location>
        <begin position="281"/>
        <end position="293"/>
    </location>
</feature>
<keyword id="KW-0012">Acyltransferase</keyword>
<keyword id="KW-1015">Disulfide bond</keyword>
<keyword id="KW-0325">Glycoprotein</keyword>
<keyword id="KW-1185">Reference proteome</keyword>
<keyword id="KW-0964">Secreted</keyword>
<keyword id="KW-0732">Signal</keyword>
<keyword id="KW-0808">Transferase</keyword>
<reference key="1">
    <citation type="journal article" date="1999" name="Nature">
        <title>Sequence and analysis of chromosome 2 of the plant Arabidopsis thaliana.</title>
        <authorList>
            <person name="Lin X."/>
            <person name="Kaul S."/>
            <person name="Rounsley S.D."/>
            <person name="Shea T.P."/>
            <person name="Benito M.-I."/>
            <person name="Town C.D."/>
            <person name="Fujii C.Y."/>
            <person name="Mason T.M."/>
            <person name="Bowman C.L."/>
            <person name="Barnstead M.E."/>
            <person name="Feldblyum T.V."/>
            <person name="Buell C.R."/>
            <person name="Ketchum K.A."/>
            <person name="Lee J.J."/>
            <person name="Ronning C.M."/>
            <person name="Koo H.L."/>
            <person name="Moffat K.S."/>
            <person name="Cronin L.A."/>
            <person name="Shen M."/>
            <person name="Pai G."/>
            <person name="Van Aken S."/>
            <person name="Umayam L."/>
            <person name="Tallon L.J."/>
            <person name="Gill J.E."/>
            <person name="Adams M.D."/>
            <person name="Carrera A.J."/>
            <person name="Creasy T.H."/>
            <person name="Goodman H.M."/>
            <person name="Somerville C.R."/>
            <person name="Copenhaver G.P."/>
            <person name="Preuss D."/>
            <person name="Nierman W.C."/>
            <person name="White O."/>
            <person name="Eisen J.A."/>
            <person name="Salzberg S.L."/>
            <person name="Fraser C.M."/>
            <person name="Venter J.C."/>
        </authorList>
    </citation>
    <scope>NUCLEOTIDE SEQUENCE [LARGE SCALE GENOMIC DNA]</scope>
    <source>
        <strain>cv. Columbia</strain>
    </source>
</reference>
<reference key="2">
    <citation type="journal article" date="2017" name="Plant J.">
        <title>Araport11: a complete reannotation of the Arabidopsis thaliana reference genome.</title>
        <authorList>
            <person name="Cheng C.Y."/>
            <person name="Krishnakumar V."/>
            <person name="Chan A.P."/>
            <person name="Thibaud-Nissen F."/>
            <person name="Schobel S."/>
            <person name="Town C.D."/>
        </authorList>
    </citation>
    <scope>GENOME REANNOTATION</scope>
    <source>
        <strain>cv. Columbia</strain>
    </source>
</reference>
<reference key="3">
    <citation type="submission" date="2002-03" db="EMBL/GenBank/DDBJ databases">
        <title>Full-length cDNA from Arabidopsis thaliana.</title>
        <authorList>
            <person name="Brover V.V."/>
            <person name="Troukhan M.E."/>
            <person name="Alexandrov N.A."/>
            <person name="Lu Y.-P."/>
            <person name="Flavell R.B."/>
            <person name="Feldmann K.A."/>
        </authorList>
    </citation>
    <scope>NUCLEOTIDE SEQUENCE [LARGE SCALE MRNA]</scope>
</reference>
<reference key="4">
    <citation type="journal article" date="2005" name="Plant Physiol.">
        <title>An expression and bioinformatics analysis of the Arabidopsis serine carboxypeptidase-like gene family.</title>
        <authorList>
            <person name="Fraser C.M."/>
            <person name="Rider L.W."/>
            <person name="Chapple C."/>
        </authorList>
    </citation>
    <scope>GENE FAMILY</scope>
    <scope>TISSUE SPECIFICITY</scope>
    <scope>NOMENCLATURE</scope>
</reference>
<reference key="5">
    <citation type="journal article" date="2007" name="Plant Physiol.">
        <title>Related Arabidopsis serine carboxypeptidase-like sinapoylglucose acyltransferases display distinct but overlapping substrate specificities.</title>
        <authorList>
            <person name="Fraser C.M."/>
            <person name="Thompson M.G."/>
            <person name="Shirley A.M."/>
            <person name="Ralph J."/>
            <person name="Schoenherr J.A."/>
            <person name="Sinlapadech T."/>
            <person name="Hall M.C."/>
            <person name="Chapple C."/>
        </authorList>
    </citation>
    <scope>FUNCTION</scope>
    <scope>DISRUPTION PHENOTYPE</scope>
</reference>
<reference key="6">
    <citation type="journal article" date="2010" name="Mol. Plant">
        <title>The ARABIDOPSIS accession Pna-10 is a naturally occurring sng1 deletion mutant.</title>
        <authorList>
            <person name="Li X."/>
            <person name="Bergelson J."/>
            <person name="Chapple C."/>
        </authorList>
    </citation>
    <scope>FUNCTION</scope>
    <source>
        <strain>cv. Columbia</strain>
        <strain>cv. Pna-10</strain>
        <strain>cv. Pna-17</strain>
    </source>
</reference>
<reference key="7">
    <citation type="journal article" date="2013" name="Plant Physiol. Biochem.">
        <title>The flavonoid biosynthetic pathway in Arabidopsis: Structural and genetic diversity.</title>
        <authorList>
            <person name="Saito K."/>
            <person name="Yonekura-Sakakibara K."/>
            <person name="Nakabayashi R."/>
            <person name="Higashi Y."/>
            <person name="Yamazaki M."/>
            <person name="Tohge T."/>
            <person name="Fernie A.R."/>
        </authorList>
    </citation>
    <scope>REVIEW</scope>
    <scope>NOMENCLATURE</scope>
</reference>
<comment type="function">
    <text evidence="4 5">Involved in the biosynthesis of sinapoylated anthocyanins.</text>
</comment>
<comment type="subcellular location">
    <subcellularLocation>
        <location evidence="6">Secreted</location>
    </subcellularLocation>
</comment>
<comment type="tissue specificity">
    <text evidence="3">Expressed in senescent leaves.</text>
</comment>
<comment type="disruption phenotype">
    <text evidence="4">Lack of sinapoylated anthocyanins.</text>
</comment>
<comment type="miscellaneous">
    <text evidence="9">In cv. Pna-10, this protein SCP10 and the adjacent SCP8 are not present due to a natural 13-kb deletion (PubMed:19969522).</text>
</comment>
<comment type="similarity">
    <text evidence="6">Belongs to the peptidase S10 family.</text>
</comment>
<comment type="caution">
    <text evidence="7 8">Was classified as a serine carboxypeptidase-like (SCPL) protein solely on the basis of the overall sequence similarity (PubMed:15908604) but it has been shown that it belongs to a class of enzymes that catalyze acyltransferase reactions (PubMed:17600138).</text>
</comment>
<comment type="sequence caution" evidence="6">
    <conflict type="frameshift">
        <sequence resource="EMBL" id="AY089099"/>
    </conflict>
</comment>
<organism>
    <name type="scientific">Arabidopsis thaliana</name>
    <name type="common">Mouse-ear cress</name>
    <dbReference type="NCBI Taxonomy" id="3702"/>
    <lineage>
        <taxon>Eukaryota</taxon>
        <taxon>Viridiplantae</taxon>
        <taxon>Streptophyta</taxon>
        <taxon>Embryophyta</taxon>
        <taxon>Tracheophyta</taxon>
        <taxon>Spermatophyta</taxon>
        <taxon>Magnoliopsida</taxon>
        <taxon>eudicotyledons</taxon>
        <taxon>Gunneridae</taxon>
        <taxon>Pentapetalae</taxon>
        <taxon>rosids</taxon>
        <taxon>malvids</taxon>
        <taxon>Brassicales</taxon>
        <taxon>Brassicaceae</taxon>
        <taxon>Camelineae</taxon>
        <taxon>Arabidopsis</taxon>
    </lineage>
</organism>
<accession>O64810</accession>
<dbReference type="EC" id="2.3.1.-"/>
<dbReference type="EMBL" id="AC004401">
    <property type="protein sequence ID" value="AAC17817.1"/>
    <property type="molecule type" value="Genomic_DNA"/>
</dbReference>
<dbReference type="EMBL" id="CP002685">
    <property type="protein sequence ID" value="AEC07395.1"/>
    <property type="molecule type" value="Genomic_DNA"/>
</dbReference>
<dbReference type="EMBL" id="CP002685">
    <property type="protein sequence ID" value="ANM62468.1"/>
    <property type="molecule type" value="Genomic_DNA"/>
</dbReference>
<dbReference type="EMBL" id="AY089099">
    <property type="status" value="NOT_ANNOTATED_CDS"/>
    <property type="molecule type" value="mRNA"/>
</dbReference>
<dbReference type="PIR" id="D84619">
    <property type="entry name" value="D84619"/>
</dbReference>
<dbReference type="RefSeq" id="NP_001324624.1">
    <property type="nucleotide sequence ID" value="NM_001335834.1"/>
</dbReference>
<dbReference type="RefSeq" id="NP_179883.1">
    <property type="nucleotide sequence ID" value="NM_127865.3"/>
</dbReference>
<dbReference type="SMR" id="O64810"/>
<dbReference type="FunCoup" id="O64810">
    <property type="interactions" value="609"/>
</dbReference>
<dbReference type="STRING" id="3702.O64810"/>
<dbReference type="ESTHER" id="arath-SCP10">
    <property type="family name" value="Carboxypeptidase_S10"/>
</dbReference>
<dbReference type="MEROPS" id="S10.A13"/>
<dbReference type="GlyCosmos" id="O64810">
    <property type="glycosylation" value="4 sites, No reported glycans"/>
</dbReference>
<dbReference type="GlyGen" id="O64810">
    <property type="glycosylation" value="4 sites"/>
</dbReference>
<dbReference type="PaxDb" id="3702-AT2G23000.1"/>
<dbReference type="ProteomicsDB" id="232701"/>
<dbReference type="EnsemblPlants" id="AT2G23000.1">
    <property type="protein sequence ID" value="AT2G23000.1"/>
    <property type="gene ID" value="AT2G23000"/>
</dbReference>
<dbReference type="EnsemblPlants" id="AT2G23000.2">
    <property type="protein sequence ID" value="AT2G23000.2"/>
    <property type="gene ID" value="AT2G23000"/>
</dbReference>
<dbReference type="GeneID" id="816831"/>
<dbReference type="Gramene" id="AT2G23000.1">
    <property type="protein sequence ID" value="AT2G23000.1"/>
    <property type="gene ID" value="AT2G23000"/>
</dbReference>
<dbReference type="Gramene" id="AT2G23000.2">
    <property type="protein sequence ID" value="AT2G23000.2"/>
    <property type="gene ID" value="AT2G23000"/>
</dbReference>
<dbReference type="KEGG" id="ath:AT2G23000"/>
<dbReference type="Araport" id="AT2G23000"/>
<dbReference type="TAIR" id="AT2G23000">
    <property type="gene designation" value="SCPL10"/>
</dbReference>
<dbReference type="eggNOG" id="KOG1282">
    <property type="taxonomic scope" value="Eukaryota"/>
</dbReference>
<dbReference type="HOGENOM" id="CLU_008523_0_1_1"/>
<dbReference type="InParanoid" id="O64810"/>
<dbReference type="OMA" id="KWIGQRR"/>
<dbReference type="PhylomeDB" id="O64810"/>
<dbReference type="BioCyc" id="ARA:AT2G23000-MONOMER"/>
<dbReference type="BioCyc" id="MetaCyc:AT2G23000-MONOMER"/>
<dbReference type="PRO" id="PR:O64810"/>
<dbReference type="Proteomes" id="UP000006548">
    <property type="component" value="Chromosome 2"/>
</dbReference>
<dbReference type="ExpressionAtlas" id="O64810">
    <property type="expression patterns" value="baseline and differential"/>
</dbReference>
<dbReference type="GO" id="GO:0005576">
    <property type="term" value="C:extracellular region"/>
    <property type="evidence" value="ECO:0007669"/>
    <property type="project" value="UniProtKB-SubCell"/>
</dbReference>
<dbReference type="GO" id="GO:0016746">
    <property type="term" value="F:acyltransferase activity"/>
    <property type="evidence" value="ECO:0007669"/>
    <property type="project" value="UniProtKB-KW"/>
</dbReference>
<dbReference type="GO" id="GO:0004185">
    <property type="term" value="F:serine-type carboxypeptidase activity"/>
    <property type="evidence" value="ECO:0007669"/>
    <property type="project" value="InterPro"/>
</dbReference>
<dbReference type="GO" id="GO:0006508">
    <property type="term" value="P:proteolysis"/>
    <property type="evidence" value="ECO:0007669"/>
    <property type="project" value="InterPro"/>
</dbReference>
<dbReference type="FunFam" id="3.40.50.1820:FF:000148">
    <property type="entry name" value="Serine carboxypeptidase-like 11"/>
    <property type="match status" value="1"/>
</dbReference>
<dbReference type="Gene3D" id="3.40.50.1820">
    <property type="entry name" value="alpha/beta hydrolase"/>
    <property type="match status" value="1"/>
</dbReference>
<dbReference type="InterPro" id="IPR029058">
    <property type="entry name" value="AB_hydrolase_fold"/>
</dbReference>
<dbReference type="InterPro" id="IPR001563">
    <property type="entry name" value="Peptidase_S10"/>
</dbReference>
<dbReference type="PANTHER" id="PTHR11802:SF196">
    <property type="entry name" value="SERINE CARBOXYPEPTIDASE-LIKE 10-RELATED"/>
    <property type="match status" value="1"/>
</dbReference>
<dbReference type="PANTHER" id="PTHR11802">
    <property type="entry name" value="SERINE PROTEASE FAMILY S10 SERINE CARBOXYPEPTIDASE"/>
    <property type="match status" value="1"/>
</dbReference>
<dbReference type="Pfam" id="PF00450">
    <property type="entry name" value="Peptidase_S10"/>
    <property type="match status" value="1"/>
</dbReference>
<dbReference type="PRINTS" id="PR00724">
    <property type="entry name" value="CRBOXYPTASEC"/>
</dbReference>
<dbReference type="SUPFAM" id="SSF53474">
    <property type="entry name" value="alpha/beta-Hydrolases"/>
    <property type="match status" value="1"/>
</dbReference>
<name>SCP10_ARATH</name>
<protein>
    <recommendedName>
        <fullName>Serine carboxypeptidase-like 10</fullName>
    </recommendedName>
    <alternativeName>
        <fullName>Sinapoylglucose--anthocyanin acyltransferase</fullName>
    </alternativeName>
    <alternativeName>
        <fullName>Sinapoylglucose--anthocyanin sinapoyltransferase</fullName>
        <shortName>SAT</shortName>
        <ecNumber>2.3.1.-</ecNumber>
    </alternativeName>
</protein>